<gene>
    <name evidence="3" type="primary">hpa/tpa</name>
    <name evidence="5" type="ordered locus">Pden_4273</name>
</gene>
<comment type="function">
    <text evidence="2">Converts hypotaurine to alanine and sulfinoacetaldehyde, which desulfinates spontaneously to acetaldehyde and sulfite. Can also catalyze the degradation of taurine into alanine and sulfoacetaldehyde, which is stable (PubMed:23603744). Has 2-fold higher aminotransferase activity with hypotaurine as the substrate (PubMed:23603744).</text>
</comment>
<comment type="catalytic activity">
    <reaction evidence="2">
        <text>hypotaurine + pyruvate = 2-sulfinoacetaldehyde + L-alanine</text>
        <dbReference type="Rhea" id="RHEA:58056"/>
        <dbReference type="ChEBI" id="CHEBI:15361"/>
        <dbReference type="ChEBI" id="CHEBI:57853"/>
        <dbReference type="ChEBI" id="CHEBI:57972"/>
        <dbReference type="ChEBI" id="CHEBI:142501"/>
        <dbReference type="EC" id="2.6.1.77"/>
    </reaction>
</comment>
<comment type="catalytic activity">
    <reaction evidence="2">
        <text>taurine + pyruvate = sulfoacetaldehyde + L-alanine</text>
        <dbReference type="Rhea" id="RHEA:10420"/>
        <dbReference type="ChEBI" id="CHEBI:15361"/>
        <dbReference type="ChEBI" id="CHEBI:57972"/>
        <dbReference type="ChEBI" id="CHEBI:58246"/>
        <dbReference type="ChEBI" id="CHEBI:507393"/>
        <dbReference type="EC" id="2.6.1.77"/>
    </reaction>
</comment>
<comment type="cofactor">
    <cofactor evidence="2">
        <name>pyridoxal 5'-phosphate</name>
        <dbReference type="ChEBI" id="CHEBI:597326"/>
    </cofactor>
</comment>
<comment type="pathway">
    <text evidence="2">Organosulfur degradation.</text>
</comment>
<comment type="induction">
    <text evidence="2">Induced by growth on hypotaurine.</text>
</comment>
<comment type="similarity">
    <text evidence="4">Belongs to the class-III pyridoxal-phosphate-dependent aminotransferase family.</text>
</comment>
<feature type="chain" id="PRO_0000446013" description="Hypotaurine/taurine--pyruvate aminotransferase">
    <location>
        <begin position="1"/>
        <end position="459"/>
    </location>
</feature>
<feature type="modified residue" description="N6-(pyridoxal phosphate)lysine" evidence="1">
    <location>
        <position position="287"/>
    </location>
</feature>
<proteinExistence type="evidence at protein level"/>
<protein>
    <recommendedName>
        <fullName evidence="4">Hypotaurine/taurine--pyruvate aminotransferase</fullName>
        <shortName evidence="3">Hpa/Tpa</shortName>
        <ecNumber evidence="2">2.6.1.77</ecNumber>
    </recommendedName>
</protein>
<keyword id="KW-0032">Aminotransferase</keyword>
<keyword id="KW-0663">Pyridoxal phosphate</keyword>
<keyword id="KW-1185">Reference proteome</keyword>
<keyword id="KW-0808">Transferase</keyword>
<organism>
    <name type="scientific">Paracoccus denitrificans (strain Pd 1222)</name>
    <dbReference type="NCBI Taxonomy" id="318586"/>
    <lineage>
        <taxon>Bacteria</taxon>
        <taxon>Pseudomonadati</taxon>
        <taxon>Pseudomonadota</taxon>
        <taxon>Alphaproteobacteria</taxon>
        <taxon>Rhodobacterales</taxon>
        <taxon>Paracoccaceae</taxon>
        <taxon>Paracoccus</taxon>
    </lineage>
</organism>
<dbReference type="EC" id="2.6.1.77" evidence="2"/>
<dbReference type="EMBL" id="CP000490">
    <property type="protein sequence ID" value="ABL72337.1"/>
    <property type="molecule type" value="Genomic_DNA"/>
</dbReference>
<dbReference type="RefSeq" id="WP_011750502.1">
    <property type="nucleotide sequence ID" value="NC_008687.1"/>
</dbReference>
<dbReference type="SMR" id="A1B9Z3"/>
<dbReference type="STRING" id="318586.Pden_4273"/>
<dbReference type="EnsemblBacteria" id="ABL72337">
    <property type="protein sequence ID" value="ABL72337"/>
    <property type="gene ID" value="Pden_4273"/>
</dbReference>
<dbReference type="GeneID" id="93453938"/>
<dbReference type="KEGG" id="pde:Pden_4273"/>
<dbReference type="eggNOG" id="COG0161">
    <property type="taxonomic scope" value="Bacteria"/>
</dbReference>
<dbReference type="HOGENOM" id="CLU_016922_4_0_5"/>
<dbReference type="OrthoDB" id="9801834at2"/>
<dbReference type="BioCyc" id="MetaCyc:MONOMER-18238"/>
<dbReference type="BRENDA" id="2.6.1.77">
    <property type="organism ID" value="3341"/>
</dbReference>
<dbReference type="Proteomes" id="UP000000361">
    <property type="component" value="Chromosome 2"/>
</dbReference>
<dbReference type="GO" id="GO:0005829">
    <property type="term" value="C:cytosol"/>
    <property type="evidence" value="ECO:0007669"/>
    <property type="project" value="TreeGrafter"/>
</dbReference>
<dbReference type="GO" id="GO:0030170">
    <property type="term" value="F:pyridoxal phosphate binding"/>
    <property type="evidence" value="ECO:0007669"/>
    <property type="project" value="InterPro"/>
</dbReference>
<dbReference type="GO" id="GO:0031299">
    <property type="term" value="F:taurine-pyruvate aminotransferase activity"/>
    <property type="evidence" value="ECO:0007669"/>
    <property type="project" value="UniProtKB-EC"/>
</dbReference>
<dbReference type="CDD" id="cd00610">
    <property type="entry name" value="OAT_like"/>
    <property type="match status" value="1"/>
</dbReference>
<dbReference type="Gene3D" id="3.90.1150.10">
    <property type="entry name" value="Aspartate Aminotransferase, domain 1"/>
    <property type="match status" value="1"/>
</dbReference>
<dbReference type="Gene3D" id="3.40.640.10">
    <property type="entry name" value="Type I PLP-dependent aspartate aminotransferase-like (Major domain)"/>
    <property type="match status" value="1"/>
</dbReference>
<dbReference type="InterPro" id="IPR005814">
    <property type="entry name" value="Aminotrans_3"/>
</dbReference>
<dbReference type="InterPro" id="IPR049704">
    <property type="entry name" value="Aminotrans_3_PPA_site"/>
</dbReference>
<dbReference type="InterPro" id="IPR015424">
    <property type="entry name" value="PyrdxlP-dep_Trfase"/>
</dbReference>
<dbReference type="InterPro" id="IPR015421">
    <property type="entry name" value="PyrdxlP-dep_Trfase_major"/>
</dbReference>
<dbReference type="InterPro" id="IPR015422">
    <property type="entry name" value="PyrdxlP-dep_Trfase_small"/>
</dbReference>
<dbReference type="PANTHER" id="PTHR43094">
    <property type="entry name" value="AMINOTRANSFERASE"/>
    <property type="match status" value="1"/>
</dbReference>
<dbReference type="PANTHER" id="PTHR43094:SF1">
    <property type="entry name" value="AMINOTRANSFERASE CLASS-III"/>
    <property type="match status" value="1"/>
</dbReference>
<dbReference type="Pfam" id="PF00202">
    <property type="entry name" value="Aminotran_3"/>
    <property type="match status" value="1"/>
</dbReference>
<dbReference type="PIRSF" id="PIRSF000521">
    <property type="entry name" value="Transaminase_4ab_Lys_Orn"/>
    <property type="match status" value="1"/>
</dbReference>
<dbReference type="SUPFAM" id="SSF53383">
    <property type="entry name" value="PLP-dependent transferases"/>
    <property type="match status" value="1"/>
</dbReference>
<dbReference type="PROSITE" id="PS00600">
    <property type="entry name" value="AA_TRANSFER_CLASS_3"/>
    <property type="match status" value="1"/>
</dbReference>
<reference key="1">
    <citation type="submission" date="2006-12" db="EMBL/GenBank/DDBJ databases">
        <title>Complete sequence of chromosome 2 of Paracoccus denitrificans PD1222.</title>
        <authorList>
            <person name="Copeland A."/>
            <person name="Lucas S."/>
            <person name="Lapidus A."/>
            <person name="Barry K."/>
            <person name="Detter J.C."/>
            <person name="Glavina del Rio T."/>
            <person name="Hammon N."/>
            <person name="Israni S."/>
            <person name="Dalin E."/>
            <person name="Tice H."/>
            <person name="Pitluck S."/>
            <person name="Munk A.C."/>
            <person name="Brettin T."/>
            <person name="Bruce D."/>
            <person name="Han C."/>
            <person name="Tapia R."/>
            <person name="Gilna P."/>
            <person name="Schmutz J."/>
            <person name="Larimer F."/>
            <person name="Land M."/>
            <person name="Hauser L."/>
            <person name="Kyrpides N."/>
            <person name="Lykidis A."/>
            <person name="Spiro S."/>
            <person name="Richardson D.J."/>
            <person name="Moir J.W.B."/>
            <person name="Ferguson S.J."/>
            <person name="van Spanning R.J.M."/>
            <person name="Richardson P."/>
        </authorList>
    </citation>
    <scope>NUCLEOTIDE SEQUENCE [LARGE SCALE GENOMIC DNA]</scope>
    <source>
        <strain>Pd 1222</strain>
    </source>
</reference>
<reference key="2">
    <citation type="journal article" date="2013" name="J. Bacteriol.">
        <title>Paracoccus denitrificans PD1222 utilizes hypotaurine via transamination followed by spontaneous desulfination to yield acetaldehyde and, finally, acetate for growth.</title>
        <authorList>
            <person name="Felux A.K."/>
            <person name="Denger K."/>
            <person name="Weiss M."/>
            <person name="Cook A.M."/>
            <person name="Schleheck D."/>
        </authorList>
    </citation>
    <scope>FUNCTION</scope>
    <scope>CATALYTIC ACTIVITY</scope>
    <scope>COFACTOR</scope>
    <scope>PATHWAY</scope>
    <scope>INDUCTION</scope>
    <scope>IDENTIFICATION BY MASS SPECTROMETRY</scope>
    <source>
        <strain>Pd 1222</strain>
    </source>
</reference>
<name>HTPA_PARDP</name>
<evidence type="ECO:0000250" key="1">
    <source>
        <dbReference type="UniProtKB" id="P12995"/>
    </source>
</evidence>
<evidence type="ECO:0000269" key="2">
    <source>
    </source>
</evidence>
<evidence type="ECO:0000303" key="3">
    <source>
    </source>
</evidence>
<evidence type="ECO:0000305" key="4"/>
<evidence type="ECO:0000312" key="5">
    <source>
        <dbReference type="EMBL" id="ABL72337.1"/>
    </source>
</evidence>
<sequence>MTLDLNPNDMSHVVAADRAHVWHHLSQHKQYETIDPRVFVEGKGMRLWDATGREFLDAVSGGVWTVNVGYGRESIADAIRDQLVKLNYYAGAAGTVPGAIFAQKLIEKMPGMTRVYYSNSGSEANEKVYKMVRQIAARHHGGKKWKILYRDRDYHGTTIATLATSGQDQRAIAYGPFPDGFVRVPHCLEYRKQWDVENYGERAADAIEEVILREGPDTVGAIVLEPVTAGGGVITPPEGYWQRVQEICRKYDILLHIDEVVCGLGRTGTWFGYQQYGIEPDFVTMAKGVASGYAAISCTVTTERVFEMFKDAPEDGMSFFRDISTFGGCTSGPVAAIENMRIIEDEGLLDNTVAMGERTLANLNALMEKHKVIGDVRGKGLFCGAELVADRASKEPMDEKKVQAVVADCLAQGVIIGATNRSLPGFNNTLCLSPALIATADNIDRITDAIDNALTKVFA</sequence>
<accession>A1B9Z3</accession>